<comment type="function">
    <text evidence="1">The alpha subunit is responsible for the aldol cleavage of indoleglycerol phosphate to indole and glyceraldehyde 3-phosphate.</text>
</comment>
<comment type="catalytic activity">
    <reaction evidence="1">
        <text>(1S,2R)-1-C-(indol-3-yl)glycerol 3-phosphate + L-serine = D-glyceraldehyde 3-phosphate + L-tryptophan + H2O</text>
        <dbReference type="Rhea" id="RHEA:10532"/>
        <dbReference type="ChEBI" id="CHEBI:15377"/>
        <dbReference type="ChEBI" id="CHEBI:33384"/>
        <dbReference type="ChEBI" id="CHEBI:57912"/>
        <dbReference type="ChEBI" id="CHEBI:58866"/>
        <dbReference type="ChEBI" id="CHEBI:59776"/>
        <dbReference type="EC" id="4.2.1.20"/>
    </reaction>
</comment>
<comment type="pathway">
    <text evidence="1">Amino-acid biosynthesis; L-tryptophan biosynthesis; L-tryptophan from chorismate: step 5/5.</text>
</comment>
<comment type="subunit">
    <text evidence="1">Tetramer of two alpha and two beta chains.</text>
</comment>
<comment type="similarity">
    <text evidence="1">Belongs to the TrpA family.</text>
</comment>
<dbReference type="EC" id="4.2.1.20" evidence="1"/>
<dbReference type="EMBL" id="AP007255">
    <property type="protein sequence ID" value="BAE52815.1"/>
    <property type="molecule type" value="Genomic_DNA"/>
</dbReference>
<dbReference type="RefSeq" id="WP_011386364.1">
    <property type="nucleotide sequence ID" value="NC_007626.1"/>
</dbReference>
<dbReference type="SMR" id="Q2W010"/>
<dbReference type="STRING" id="342108.amb4011"/>
<dbReference type="KEGG" id="mag:amb4011"/>
<dbReference type="HOGENOM" id="CLU_016734_0_0_5"/>
<dbReference type="OrthoDB" id="9804578at2"/>
<dbReference type="UniPathway" id="UPA00035">
    <property type="reaction ID" value="UER00044"/>
</dbReference>
<dbReference type="Proteomes" id="UP000007058">
    <property type="component" value="Chromosome"/>
</dbReference>
<dbReference type="GO" id="GO:0005829">
    <property type="term" value="C:cytosol"/>
    <property type="evidence" value="ECO:0007669"/>
    <property type="project" value="TreeGrafter"/>
</dbReference>
<dbReference type="GO" id="GO:0004834">
    <property type="term" value="F:tryptophan synthase activity"/>
    <property type="evidence" value="ECO:0007669"/>
    <property type="project" value="UniProtKB-UniRule"/>
</dbReference>
<dbReference type="CDD" id="cd04724">
    <property type="entry name" value="Tryptophan_synthase_alpha"/>
    <property type="match status" value="1"/>
</dbReference>
<dbReference type="FunFam" id="3.20.20.70:FF:000037">
    <property type="entry name" value="Tryptophan synthase alpha chain"/>
    <property type="match status" value="1"/>
</dbReference>
<dbReference type="Gene3D" id="3.20.20.70">
    <property type="entry name" value="Aldolase class I"/>
    <property type="match status" value="1"/>
</dbReference>
<dbReference type="HAMAP" id="MF_00131">
    <property type="entry name" value="Trp_synth_alpha"/>
    <property type="match status" value="1"/>
</dbReference>
<dbReference type="InterPro" id="IPR013785">
    <property type="entry name" value="Aldolase_TIM"/>
</dbReference>
<dbReference type="InterPro" id="IPR011060">
    <property type="entry name" value="RibuloseP-bd_barrel"/>
</dbReference>
<dbReference type="InterPro" id="IPR018204">
    <property type="entry name" value="Trp_synthase_alpha_AS"/>
</dbReference>
<dbReference type="InterPro" id="IPR002028">
    <property type="entry name" value="Trp_synthase_suA"/>
</dbReference>
<dbReference type="NCBIfam" id="TIGR00262">
    <property type="entry name" value="trpA"/>
    <property type="match status" value="1"/>
</dbReference>
<dbReference type="PANTHER" id="PTHR43406:SF1">
    <property type="entry name" value="TRYPTOPHAN SYNTHASE ALPHA CHAIN, CHLOROPLASTIC"/>
    <property type="match status" value="1"/>
</dbReference>
<dbReference type="PANTHER" id="PTHR43406">
    <property type="entry name" value="TRYPTOPHAN SYNTHASE, ALPHA CHAIN"/>
    <property type="match status" value="1"/>
</dbReference>
<dbReference type="Pfam" id="PF00290">
    <property type="entry name" value="Trp_syntA"/>
    <property type="match status" value="1"/>
</dbReference>
<dbReference type="SUPFAM" id="SSF51366">
    <property type="entry name" value="Ribulose-phoshate binding barrel"/>
    <property type="match status" value="1"/>
</dbReference>
<dbReference type="PROSITE" id="PS00167">
    <property type="entry name" value="TRP_SYNTHASE_ALPHA"/>
    <property type="match status" value="1"/>
</dbReference>
<evidence type="ECO:0000255" key="1">
    <source>
        <dbReference type="HAMAP-Rule" id="MF_00131"/>
    </source>
</evidence>
<reference key="1">
    <citation type="journal article" date="2005" name="DNA Res.">
        <title>Complete genome sequence of the facultative anaerobic magnetotactic bacterium Magnetospirillum sp. strain AMB-1.</title>
        <authorList>
            <person name="Matsunaga T."/>
            <person name="Okamura Y."/>
            <person name="Fukuda Y."/>
            <person name="Wahyudi A.T."/>
            <person name="Murase Y."/>
            <person name="Takeyama H."/>
        </authorList>
    </citation>
    <scope>NUCLEOTIDE SEQUENCE [LARGE SCALE GENOMIC DNA]</scope>
    <source>
        <strain>ATCC 700264 / AMB-1</strain>
    </source>
</reference>
<accession>Q2W010</accession>
<name>TRPA_PARM1</name>
<proteinExistence type="inferred from homology"/>
<keyword id="KW-0028">Amino-acid biosynthesis</keyword>
<keyword id="KW-0057">Aromatic amino acid biosynthesis</keyword>
<keyword id="KW-0456">Lyase</keyword>
<keyword id="KW-0822">Tryptophan biosynthesis</keyword>
<gene>
    <name evidence="1" type="primary">trpA</name>
    <name type="ordered locus">amb4011</name>
</gene>
<organism>
    <name type="scientific">Paramagnetospirillum magneticum (strain ATCC 700264 / AMB-1)</name>
    <name type="common">Magnetospirillum magneticum</name>
    <dbReference type="NCBI Taxonomy" id="342108"/>
    <lineage>
        <taxon>Bacteria</taxon>
        <taxon>Pseudomonadati</taxon>
        <taxon>Pseudomonadota</taxon>
        <taxon>Alphaproteobacteria</taxon>
        <taxon>Rhodospirillales</taxon>
        <taxon>Magnetospirillaceae</taxon>
        <taxon>Paramagnetospirillum</taxon>
    </lineage>
</organism>
<feature type="chain" id="PRO_1000117742" description="Tryptophan synthase alpha chain">
    <location>
        <begin position="1"/>
        <end position="269"/>
    </location>
</feature>
<feature type="active site" description="Proton acceptor" evidence="1">
    <location>
        <position position="49"/>
    </location>
</feature>
<feature type="active site" description="Proton acceptor" evidence="1">
    <location>
        <position position="60"/>
    </location>
</feature>
<sequence>MSRIAKRFAKLKAENRAALVTFITAGDPDHATSQALLDGMPAAGADIIELGMPFTDPMADGPAIQLAAGRALAAGGSLRQTLEMVEAFRKTDAETPIILMGYYNPVYAWGAEKFAADAAKAGVDGLIIVDLPPEEADELVPFLRQAGIDFIVLTTPTSDDARLPVVLANASGFVYYVSIAGITGTASAAQSAIDEAVARIRRHTGLPVCVGFGIKDPAQAAEVARVADGAVVGSAIVSVLADNIGKPGAVSAPLALVKDLAAGVRGARN</sequence>
<protein>
    <recommendedName>
        <fullName evidence="1">Tryptophan synthase alpha chain</fullName>
        <ecNumber evidence="1">4.2.1.20</ecNumber>
    </recommendedName>
</protein>